<feature type="chain" id="PRO_1000139852" description="HTH-type transcriptional regulator MalT">
    <location>
        <begin position="1"/>
        <end position="901"/>
    </location>
</feature>
<feature type="domain" description="HTH luxR-type" evidence="1">
    <location>
        <begin position="829"/>
        <end position="894"/>
    </location>
</feature>
<feature type="DNA-binding region" description="H-T-H motif" evidence="1">
    <location>
        <begin position="853"/>
        <end position="872"/>
    </location>
</feature>
<feature type="binding site" evidence="1">
    <location>
        <begin position="39"/>
        <end position="46"/>
    </location>
    <ligand>
        <name>ATP</name>
        <dbReference type="ChEBI" id="CHEBI:30616"/>
    </ligand>
</feature>
<organism>
    <name type="scientific">Klebsiella pneumoniae (strain 342)</name>
    <dbReference type="NCBI Taxonomy" id="507522"/>
    <lineage>
        <taxon>Bacteria</taxon>
        <taxon>Pseudomonadati</taxon>
        <taxon>Pseudomonadota</taxon>
        <taxon>Gammaproteobacteria</taxon>
        <taxon>Enterobacterales</taxon>
        <taxon>Enterobacteriaceae</taxon>
        <taxon>Klebsiella/Raoultella group</taxon>
        <taxon>Klebsiella</taxon>
        <taxon>Klebsiella pneumoniae complex</taxon>
    </lineage>
</organism>
<dbReference type="EMBL" id="CP000964">
    <property type="protein sequence ID" value="ACI11106.1"/>
    <property type="molecule type" value="Genomic_DNA"/>
</dbReference>
<dbReference type="SMR" id="B5XTR7"/>
<dbReference type="KEGG" id="kpe:KPK_0326"/>
<dbReference type="HOGENOM" id="CLU_006325_3_0_6"/>
<dbReference type="Proteomes" id="UP000001734">
    <property type="component" value="Chromosome"/>
</dbReference>
<dbReference type="GO" id="GO:0005524">
    <property type="term" value="F:ATP binding"/>
    <property type="evidence" value="ECO:0007669"/>
    <property type="project" value="UniProtKB-UniRule"/>
</dbReference>
<dbReference type="GO" id="GO:0003677">
    <property type="term" value="F:DNA binding"/>
    <property type="evidence" value="ECO:0007669"/>
    <property type="project" value="UniProtKB-KW"/>
</dbReference>
<dbReference type="GO" id="GO:0003700">
    <property type="term" value="F:DNA-binding transcription factor activity"/>
    <property type="evidence" value="ECO:0007669"/>
    <property type="project" value="UniProtKB-UniRule"/>
</dbReference>
<dbReference type="GO" id="GO:0045913">
    <property type="term" value="P:positive regulation of carbohydrate metabolic process"/>
    <property type="evidence" value="ECO:0007669"/>
    <property type="project" value="UniProtKB-UniRule"/>
</dbReference>
<dbReference type="GO" id="GO:0045893">
    <property type="term" value="P:positive regulation of DNA-templated transcription"/>
    <property type="evidence" value="ECO:0007669"/>
    <property type="project" value="UniProtKB-UniRule"/>
</dbReference>
<dbReference type="CDD" id="cd06170">
    <property type="entry name" value="LuxR_C_like"/>
    <property type="match status" value="1"/>
</dbReference>
<dbReference type="FunFam" id="1.10.10.10:FF:000115">
    <property type="entry name" value="HTH-type transcriptional regulator MalT"/>
    <property type="match status" value="1"/>
</dbReference>
<dbReference type="Gene3D" id="3.40.50.300">
    <property type="entry name" value="P-loop containing nucleotide triphosphate hydrolases"/>
    <property type="match status" value="1"/>
</dbReference>
<dbReference type="Gene3D" id="1.25.40.10">
    <property type="entry name" value="Tetratricopeptide repeat domain"/>
    <property type="match status" value="1"/>
</dbReference>
<dbReference type="Gene3D" id="1.10.10.10">
    <property type="entry name" value="Winged helix-like DNA-binding domain superfamily/Winged helix DNA-binding domain"/>
    <property type="match status" value="1"/>
</dbReference>
<dbReference type="HAMAP" id="MF_01247">
    <property type="entry name" value="HTH_type_MalT"/>
    <property type="match status" value="1"/>
</dbReference>
<dbReference type="InterPro" id="IPR027417">
    <property type="entry name" value="P-loop_NTPase"/>
</dbReference>
<dbReference type="InterPro" id="IPR016032">
    <property type="entry name" value="Sig_transdc_resp-reg_C-effctor"/>
</dbReference>
<dbReference type="InterPro" id="IPR011990">
    <property type="entry name" value="TPR-like_helical_dom_sf"/>
</dbReference>
<dbReference type="InterPro" id="IPR041617">
    <property type="entry name" value="TPR_MalT"/>
</dbReference>
<dbReference type="InterPro" id="IPR023768">
    <property type="entry name" value="Tscrpt_reg_HTH_MalT"/>
</dbReference>
<dbReference type="InterPro" id="IPR000792">
    <property type="entry name" value="Tscrpt_reg_LuxR_C"/>
</dbReference>
<dbReference type="InterPro" id="IPR036388">
    <property type="entry name" value="WH-like_DNA-bd_sf"/>
</dbReference>
<dbReference type="NCBIfam" id="NF003420">
    <property type="entry name" value="PRK04841.1"/>
    <property type="match status" value="1"/>
</dbReference>
<dbReference type="PANTHER" id="PTHR44688">
    <property type="entry name" value="DNA-BINDING TRANSCRIPTIONAL ACTIVATOR DEVR_DOSR"/>
    <property type="match status" value="1"/>
</dbReference>
<dbReference type="PANTHER" id="PTHR44688:SF16">
    <property type="entry name" value="DNA-BINDING TRANSCRIPTIONAL ACTIVATOR DEVR_DOSR"/>
    <property type="match status" value="1"/>
</dbReference>
<dbReference type="Pfam" id="PF00196">
    <property type="entry name" value="GerE"/>
    <property type="match status" value="1"/>
</dbReference>
<dbReference type="Pfam" id="PF17874">
    <property type="entry name" value="TPR_MalT"/>
    <property type="match status" value="1"/>
</dbReference>
<dbReference type="PRINTS" id="PR00038">
    <property type="entry name" value="HTHLUXR"/>
</dbReference>
<dbReference type="SMART" id="SM00421">
    <property type="entry name" value="HTH_LUXR"/>
    <property type="match status" value="1"/>
</dbReference>
<dbReference type="SUPFAM" id="SSF46894">
    <property type="entry name" value="C-terminal effector domain of the bipartite response regulators"/>
    <property type="match status" value="1"/>
</dbReference>
<dbReference type="SUPFAM" id="SSF52540">
    <property type="entry name" value="P-loop containing nucleoside triphosphate hydrolases"/>
    <property type="match status" value="1"/>
</dbReference>
<dbReference type="SUPFAM" id="SSF48452">
    <property type="entry name" value="TPR-like"/>
    <property type="match status" value="1"/>
</dbReference>
<dbReference type="PROSITE" id="PS00622">
    <property type="entry name" value="HTH_LUXR_1"/>
    <property type="match status" value="1"/>
</dbReference>
<dbReference type="PROSITE" id="PS50043">
    <property type="entry name" value="HTH_LUXR_2"/>
    <property type="match status" value="1"/>
</dbReference>
<accession>B5XTR7</accession>
<protein>
    <recommendedName>
        <fullName evidence="1">HTH-type transcriptional regulator MalT</fullName>
    </recommendedName>
    <alternativeName>
        <fullName evidence="1">ATP-dependent transcriptional activator MalT</fullName>
    </alternativeName>
</protein>
<reference key="1">
    <citation type="journal article" date="2008" name="PLoS Genet.">
        <title>Complete genome sequence of the N2-fixing broad host range endophyte Klebsiella pneumoniae 342 and virulence predictions verified in mice.</title>
        <authorList>
            <person name="Fouts D.E."/>
            <person name="Tyler H.L."/>
            <person name="DeBoy R.T."/>
            <person name="Daugherty S."/>
            <person name="Ren Q."/>
            <person name="Badger J.H."/>
            <person name="Durkin A.S."/>
            <person name="Huot H."/>
            <person name="Shrivastava S."/>
            <person name="Kothari S."/>
            <person name="Dodson R.J."/>
            <person name="Mohamoud Y."/>
            <person name="Khouri H."/>
            <person name="Roesch L.F.W."/>
            <person name="Krogfelt K.A."/>
            <person name="Struve C."/>
            <person name="Triplett E.W."/>
            <person name="Methe B.A."/>
        </authorList>
    </citation>
    <scope>NUCLEOTIDE SEQUENCE [LARGE SCALE GENOMIC DNA]</scope>
    <source>
        <strain>342</strain>
    </source>
</reference>
<name>MALT_KLEP3</name>
<evidence type="ECO:0000255" key="1">
    <source>
        <dbReference type="HAMAP-Rule" id="MF_01247"/>
    </source>
</evidence>
<proteinExistence type="inferred from homology"/>
<sequence>MLIPSKLSRPVRLEHTVVRERLLAKLSGANNYRLVLITSPAGYGKTTLISQWAAGKNDLGWFSLDEGDNQQERFASYLIAAIQQATGNHCAASEAMVQKRQYASLSSLFAQLFIELADWQRPLYLVIDDYHLINNPVIHDAMRFFLRHQPENMTLVVLSRNLPQLGIANLRVRDQLLEIGSQQLAFTHQEAKQFFDCRLTSPIEADDSSRLCDDVAGWATALQLIALSARQNNSSAQHSARRLAGINASHLSDYLVDEVLDNVDARTRNFLLKSSLLRSMNDALIVRVTGEENGQMQLEEIERQGLFLQRMDDSGEWFRYHPLFGSFLRQRCQWELAVELPEIHRAAAESWMAQGFPSEAIHHALAAGDAKMLRDILLNHAWGMFNHSELGLLEQSLSALPWSNLLENPRLILLQAWLMQSQHRYSEVNTLLARAEQEMSVEMDTAMHGDFNALRAQVAINDGDQDEAERLSMVALEELPLANYYSRIVATSVHGEVLHCKGKLTKSLAVMQQTEQMARRHDVWHYALWSIIQQSEILFAQGFLQAAWESQEKAFQLVREQHLEQLPMHEFLLRIRSQLLWAWARLDEAEACARQGMDVLSTYQPQQQLQCLALMVQCSLARGDLDNARSHLNRLENLLGNGHYHSDWVSNADKVRVIYWQMTGDKTAAANWLRQTPKPEFANNHFLQSQWRNIARAQILLGDFEPAEMVLEELNENARSLRLMSDLNRNLLLLNQLYWQAGRKSEAQKALLEALTLANRTGFINHFVIEGEAMAQQLRQLIQLNTLPELEQHRAQRILRDINQHHRHKFAHFDEGFVERLLNHPEVPELIRTSPLTQREWQVLGLIYSGYSNEQIAGELDVAATTIKTHIRNLYQKLGVAHRQDAVQHAQQLLKMMGYGV</sequence>
<keyword id="KW-0010">Activator</keyword>
<keyword id="KW-0067">ATP-binding</keyword>
<keyword id="KW-0119">Carbohydrate metabolism</keyword>
<keyword id="KW-0238">DNA-binding</keyword>
<keyword id="KW-0547">Nucleotide-binding</keyword>
<keyword id="KW-0804">Transcription</keyword>
<keyword id="KW-0805">Transcription regulation</keyword>
<comment type="function">
    <text evidence="1">Positively regulates the transcription of the maltose regulon whose gene products are responsible for uptake and catabolism of malto-oligosaccharides. Specifically binds to the promoter region of its target genes, recognizing a short DNA motif called the MalT box.</text>
</comment>
<comment type="activity regulation">
    <text evidence="1">Activated by ATP and maltotriose, which are both required for DNA binding.</text>
</comment>
<comment type="subunit">
    <text evidence="1">Monomer in solution. Oligomerizes to an active state in the presence of the positive effectors ATP and maltotriose.</text>
</comment>
<comment type="similarity">
    <text evidence="1">Belongs to the MalT family.</text>
</comment>
<gene>
    <name evidence="1" type="primary">malT</name>
    <name type="ordered locus">KPK_0326</name>
</gene>